<evidence type="ECO:0000255" key="1">
    <source>
        <dbReference type="HAMAP-Rule" id="MF_00514"/>
    </source>
</evidence>
<evidence type="ECO:0000305" key="2"/>
<reference key="1">
    <citation type="submission" date="2007-03" db="EMBL/GenBank/DDBJ databases">
        <authorList>
            <person name="Heidelberg J."/>
        </authorList>
    </citation>
    <scope>NUCLEOTIDE SEQUENCE [LARGE SCALE GENOMIC DNA]</scope>
    <source>
        <strain>ATCC 39541 / Classical Ogawa 395 / O395</strain>
    </source>
</reference>
<reference key="2">
    <citation type="journal article" date="2008" name="PLoS ONE">
        <title>A recalibrated molecular clock and independent origins for the cholera pandemic clones.</title>
        <authorList>
            <person name="Feng L."/>
            <person name="Reeves P.R."/>
            <person name="Lan R."/>
            <person name="Ren Y."/>
            <person name="Gao C."/>
            <person name="Zhou Z."/>
            <person name="Ren Y."/>
            <person name="Cheng J."/>
            <person name="Wang W."/>
            <person name="Wang J."/>
            <person name="Qian W."/>
            <person name="Li D."/>
            <person name="Wang L."/>
        </authorList>
    </citation>
    <scope>NUCLEOTIDE SEQUENCE [LARGE SCALE GENOMIC DNA]</scope>
    <source>
        <strain>ATCC 39541 / Classical Ogawa 395 / O395</strain>
    </source>
</reference>
<proteinExistence type="inferred from homology"/>
<gene>
    <name evidence="1" type="primary">rpmI</name>
    <name type="ordered locus">VC0395_0940</name>
    <name type="ordered locus">VC395_A0326</name>
</gene>
<name>RL35_VIBC3</name>
<dbReference type="EMBL" id="CP000626">
    <property type="protein sequence ID" value="ABQ18999.1"/>
    <property type="molecule type" value="Genomic_DNA"/>
</dbReference>
<dbReference type="EMBL" id="CP001236">
    <property type="protein sequence ID" value="ACP11166.1"/>
    <property type="molecule type" value="Genomic_DNA"/>
</dbReference>
<dbReference type="RefSeq" id="WP_001885060.1">
    <property type="nucleotide sequence ID" value="NZ_JAACZH010000044.1"/>
</dbReference>
<dbReference type="SMR" id="A5EZ16"/>
<dbReference type="GeneID" id="94015622"/>
<dbReference type="KEGG" id="vco:VC0395_0940"/>
<dbReference type="KEGG" id="vcr:VC395_A0326"/>
<dbReference type="PATRIC" id="fig|345073.21.peg.3086"/>
<dbReference type="eggNOG" id="COG0291">
    <property type="taxonomic scope" value="Bacteria"/>
</dbReference>
<dbReference type="HOGENOM" id="CLU_169643_4_3_6"/>
<dbReference type="OrthoDB" id="47476at2"/>
<dbReference type="Proteomes" id="UP000000249">
    <property type="component" value="Chromosome 1"/>
</dbReference>
<dbReference type="GO" id="GO:0022625">
    <property type="term" value="C:cytosolic large ribosomal subunit"/>
    <property type="evidence" value="ECO:0007669"/>
    <property type="project" value="TreeGrafter"/>
</dbReference>
<dbReference type="GO" id="GO:0003735">
    <property type="term" value="F:structural constituent of ribosome"/>
    <property type="evidence" value="ECO:0007669"/>
    <property type="project" value="InterPro"/>
</dbReference>
<dbReference type="GO" id="GO:0006412">
    <property type="term" value="P:translation"/>
    <property type="evidence" value="ECO:0007669"/>
    <property type="project" value="UniProtKB-UniRule"/>
</dbReference>
<dbReference type="FunFam" id="4.10.410.60:FF:000001">
    <property type="entry name" value="50S ribosomal protein L35"/>
    <property type="match status" value="1"/>
</dbReference>
<dbReference type="Gene3D" id="4.10.410.60">
    <property type="match status" value="1"/>
</dbReference>
<dbReference type="HAMAP" id="MF_00514">
    <property type="entry name" value="Ribosomal_bL35"/>
    <property type="match status" value="1"/>
</dbReference>
<dbReference type="InterPro" id="IPR001706">
    <property type="entry name" value="Ribosomal_bL35"/>
</dbReference>
<dbReference type="InterPro" id="IPR021137">
    <property type="entry name" value="Ribosomal_bL35-like"/>
</dbReference>
<dbReference type="InterPro" id="IPR018265">
    <property type="entry name" value="Ribosomal_bL35_CS"/>
</dbReference>
<dbReference type="InterPro" id="IPR037229">
    <property type="entry name" value="Ribosomal_bL35_sf"/>
</dbReference>
<dbReference type="NCBIfam" id="TIGR00001">
    <property type="entry name" value="rpmI_bact"/>
    <property type="match status" value="1"/>
</dbReference>
<dbReference type="PANTHER" id="PTHR33343">
    <property type="entry name" value="54S RIBOSOMAL PROTEIN BL35M"/>
    <property type="match status" value="1"/>
</dbReference>
<dbReference type="PANTHER" id="PTHR33343:SF1">
    <property type="entry name" value="LARGE RIBOSOMAL SUBUNIT PROTEIN BL35M"/>
    <property type="match status" value="1"/>
</dbReference>
<dbReference type="Pfam" id="PF01632">
    <property type="entry name" value="Ribosomal_L35p"/>
    <property type="match status" value="1"/>
</dbReference>
<dbReference type="PRINTS" id="PR00064">
    <property type="entry name" value="RIBOSOMALL35"/>
</dbReference>
<dbReference type="SUPFAM" id="SSF143034">
    <property type="entry name" value="L35p-like"/>
    <property type="match status" value="1"/>
</dbReference>
<dbReference type="PROSITE" id="PS00936">
    <property type="entry name" value="RIBOSOMAL_L35"/>
    <property type="match status" value="1"/>
</dbReference>
<protein>
    <recommendedName>
        <fullName evidence="1">Large ribosomal subunit protein bL35</fullName>
    </recommendedName>
    <alternativeName>
        <fullName evidence="2">50S ribosomal protein L35</fullName>
    </alternativeName>
</protein>
<organism>
    <name type="scientific">Vibrio cholerae serotype O1 (strain ATCC 39541 / Classical Ogawa 395 / O395)</name>
    <dbReference type="NCBI Taxonomy" id="345073"/>
    <lineage>
        <taxon>Bacteria</taxon>
        <taxon>Pseudomonadati</taxon>
        <taxon>Pseudomonadota</taxon>
        <taxon>Gammaproteobacteria</taxon>
        <taxon>Vibrionales</taxon>
        <taxon>Vibrionaceae</taxon>
        <taxon>Vibrio</taxon>
    </lineage>
</organism>
<accession>A5EZ16</accession>
<accession>C3M820</accession>
<keyword id="KW-0687">Ribonucleoprotein</keyword>
<keyword id="KW-0689">Ribosomal protein</keyword>
<feature type="chain" id="PRO_1000072482" description="Large ribosomal subunit protein bL35">
    <location>
        <begin position="1"/>
        <end position="64"/>
    </location>
</feature>
<sequence>MPKMKNNKGAAKRFKKTAGGIKYKHATKRHILTKRTTKNKRQLRPNAILPKCELAAVARMLPYA</sequence>
<comment type="similarity">
    <text evidence="1">Belongs to the bacterial ribosomal protein bL35 family.</text>
</comment>